<accession>A8ALC1</accession>
<feature type="chain" id="PRO_1000003931" description="Small ribosomal subunit protein uS2">
    <location>
        <begin position="1"/>
        <end position="241"/>
    </location>
</feature>
<dbReference type="EMBL" id="CP000822">
    <property type="protein sequence ID" value="ABV14284.1"/>
    <property type="molecule type" value="Genomic_DNA"/>
</dbReference>
<dbReference type="RefSeq" id="WP_012133990.1">
    <property type="nucleotide sequence ID" value="NC_009792.1"/>
</dbReference>
<dbReference type="SMR" id="A8ALC1"/>
<dbReference type="STRING" id="290338.CKO_03199"/>
<dbReference type="GeneID" id="93031805"/>
<dbReference type="KEGG" id="cko:CKO_03199"/>
<dbReference type="HOGENOM" id="CLU_040318_1_0_6"/>
<dbReference type="OrthoDB" id="9808036at2"/>
<dbReference type="Proteomes" id="UP000008148">
    <property type="component" value="Chromosome"/>
</dbReference>
<dbReference type="GO" id="GO:0022627">
    <property type="term" value="C:cytosolic small ribosomal subunit"/>
    <property type="evidence" value="ECO:0007669"/>
    <property type="project" value="TreeGrafter"/>
</dbReference>
<dbReference type="GO" id="GO:0003735">
    <property type="term" value="F:structural constituent of ribosome"/>
    <property type="evidence" value="ECO:0007669"/>
    <property type="project" value="InterPro"/>
</dbReference>
<dbReference type="GO" id="GO:0006412">
    <property type="term" value="P:translation"/>
    <property type="evidence" value="ECO:0007669"/>
    <property type="project" value="UniProtKB-UniRule"/>
</dbReference>
<dbReference type="CDD" id="cd01425">
    <property type="entry name" value="RPS2"/>
    <property type="match status" value="1"/>
</dbReference>
<dbReference type="FunFam" id="1.10.287.610:FF:000001">
    <property type="entry name" value="30S ribosomal protein S2"/>
    <property type="match status" value="1"/>
</dbReference>
<dbReference type="Gene3D" id="3.40.50.10490">
    <property type="entry name" value="Glucose-6-phosphate isomerase like protein, domain 1"/>
    <property type="match status" value="1"/>
</dbReference>
<dbReference type="Gene3D" id="1.10.287.610">
    <property type="entry name" value="Helix hairpin bin"/>
    <property type="match status" value="1"/>
</dbReference>
<dbReference type="HAMAP" id="MF_00291_B">
    <property type="entry name" value="Ribosomal_uS2_B"/>
    <property type="match status" value="1"/>
</dbReference>
<dbReference type="InterPro" id="IPR001865">
    <property type="entry name" value="Ribosomal_uS2"/>
</dbReference>
<dbReference type="InterPro" id="IPR005706">
    <property type="entry name" value="Ribosomal_uS2_bac/mit/plastid"/>
</dbReference>
<dbReference type="InterPro" id="IPR018130">
    <property type="entry name" value="Ribosomal_uS2_CS"/>
</dbReference>
<dbReference type="InterPro" id="IPR023591">
    <property type="entry name" value="Ribosomal_uS2_flav_dom_sf"/>
</dbReference>
<dbReference type="NCBIfam" id="TIGR01011">
    <property type="entry name" value="rpsB_bact"/>
    <property type="match status" value="1"/>
</dbReference>
<dbReference type="PANTHER" id="PTHR12534">
    <property type="entry name" value="30S RIBOSOMAL PROTEIN S2 PROKARYOTIC AND ORGANELLAR"/>
    <property type="match status" value="1"/>
</dbReference>
<dbReference type="PANTHER" id="PTHR12534:SF0">
    <property type="entry name" value="SMALL RIBOSOMAL SUBUNIT PROTEIN US2M"/>
    <property type="match status" value="1"/>
</dbReference>
<dbReference type="Pfam" id="PF00318">
    <property type="entry name" value="Ribosomal_S2"/>
    <property type="match status" value="1"/>
</dbReference>
<dbReference type="PRINTS" id="PR00395">
    <property type="entry name" value="RIBOSOMALS2"/>
</dbReference>
<dbReference type="SUPFAM" id="SSF52313">
    <property type="entry name" value="Ribosomal protein S2"/>
    <property type="match status" value="1"/>
</dbReference>
<dbReference type="PROSITE" id="PS00962">
    <property type="entry name" value="RIBOSOMAL_S2_1"/>
    <property type="match status" value="1"/>
</dbReference>
<dbReference type="PROSITE" id="PS00963">
    <property type="entry name" value="RIBOSOMAL_S2_2"/>
    <property type="match status" value="1"/>
</dbReference>
<reference key="1">
    <citation type="submission" date="2007-08" db="EMBL/GenBank/DDBJ databases">
        <authorList>
            <consortium name="The Citrobacter koseri Genome Sequencing Project"/>
            <person name="McClelland M."/>
            <person name="Sanderson E.K."/>
            <person name="Porwollik S."/>
            <person name="Spieth J."/>
            <person name="Clifton W.S."/>
            <person name="Latreille P."/>
            <person name="Courtney L."/>
            <person name="Wang C."/>
            <person name="Pepin K."/>
            <person name="Bhonagiri V."/>
            <person name="Nash W."/>
            <person name="Johnson M."/>
            <person name="Thiruvilangam P."/>
            <person name="Wilson R."/>
        </authorList>
    </citation>
    <scope>NUCLEOTIDE SEQUENCE [LARGE SCALE GENOMIC DNA]</scope>
    <source>
        <strain>ATCC BAA-895 / CDC 4225-83 / SGSC4696</strain>
    </source>
</reference>
<sequence length="241" mass="26745">MATVSMRDMLKAGVHFGHQTRYWNPKMKPFIFGARNKVHIINLEKTVPMFNEALAELNKIASRKGKILFVGTKRAASEAVKDAANSCDQFFVNHRWLGGMLTNWKTVRQSIKRLKDLETQSQDGTFEKLTKKEALMRTRELEKLENSLGGIKDMGGLPDALFVIDADHEHIAIKEANNLGIPVFAIVDTNSDPDGVDFVIPGNDDAIRAVSLYLGAVAATVREGRSQDLASQAEESFVEAE</sequence>
<gene>
    <name evidence="1" type="primary">rpsB</name>
    <name type="ordered locus">CKO_03199</name>
</gene>
<proteinExistence type="inferred from homology"/>
<organism>
    <name type="scientific">Citrobacter koseri (strain ATCC BAA-895 / CDC 4225-83 / SGSC4696)</name>
    <dbReference type="NCBI Taxonomy" id="290338"/>
    <lineage>
        <taxon>Bacteria</taxon>
        <taxon>Pseudomonadati</taxon>
        <taxon>Pseudomonadota</taxon>
        <taxon>Gammaproteobacteria</taxon>
        <taxon>Enterobacterales</taxon>
        <taxon>Enterobacteriaceae</taxon>
        <taxon>Citrobacter</taxon>
    </lineage>
</organism>
<keyword id="KW-1185">Reference proteome</keyword>
<keyword id="KW-0687">Ribonucleoprotein</keyword>
<keyword id="KW-0689">Ribosomal protein</keyword>
<evidence type="ECO:0000255" key="1">
    <source>
        <dbReference type="HAMAP-Rule" id="MF_00291"/>
    </source>
</evidence>
<evidence type="ECO:0000305" key="2"/>
<name>RS2_CITK8</name>
<protein>
    <recommendedName>
        <fullName evidence="1">Small ribosomal subunit protein uS2</fullName>
    </recommendedName>
    <alternativeName>
        <fullName evidence="2">30S ribosomal protein S2</fullName>
    </alternativeName>
</protein>
<comment type="similarity">
    <text evidence="1">Belongs to the universal ribosomal protein uS2 family.</text>
</comment>